<gene>
    <name evidence="1" type="primary">metG</name>
    <name type="ordered locus">Dshi_2707</name>
</gene>
<evidence type="ECO:0000255" key="1">
    <source>
        <dbReference type="HAMAP-Rule" id="MF_00098"/>
    </source>
</evidence>
<reference key="1">
    <citation type="journal article" date="2010" name="ISME J.">
        <title>The complete genome sequence of the algal symbiont Dinoroseobacter shibae: a hitchhiker's guide to life in the sea.</title>
        <authorList>
            <person name="Wagner-Dobler I."/>
            <person name="Ballhausen B."/>
            <person name="Berger M."/>
            <person name="Brinkhoff T."/>
            <person name="Buchholz I."/>
            <person name="Bunk B."/>
            <person name="Cypionka H."/>
            <person name="Daniel R."/>
            <person name="Drepper T."/>
            <person name="Gerdts G."/>
            <person name="Hahnke S."/>
            <person name="Han C."/>
            <person name="Jahn D."/>
            <person name="Kalhoefer D."/>
            <person name="Kiss H."/>
            <person name="Klenk H.P."/>
            <person name="Kyrpides N."/>
            <person name="Liebl W."/>
            <person name="Liesegang H."/>
            <person name="Meincke L."/>
            <person name="Pati A."/>
            <person name="Petersen J."/>
            <person name="Piekarski T."/>
            <person name="Pommerenke C."/>
            <person name="Pradella S."/>
            <person name="Pukall R."/>
            <person name="Rabus R."/>
            <person name="Stackebrandt E."/>
            <person name="Thole S."/>
            <person name="Thompson L."/>
            <person name="Tielen P."/>
            <person name="Tomasch J."/>
            <person name="von Jan M."/>
            <person name="Wanphrut N."/>
            <person name="Wichels A."/>
            <person name="Zech H."/>
            <person name="Simon M."/>
        </authorList>
    </citation>
    <scope>NUCLEOTIDE SEQUENCE [LARGE SCALE GENOMIC DNA]</scope>
    <source>
        <strain>DSM 16493 / NCIMB 14021 / DFL 12</strain>
    </source>
</reference>
<protein>
    <recommendedName>
        <fullName evidence="1">Methionine--tRNA ligase</fullName>
        <ecNumber evidence="1">6.1.1.10</ecNumber>
    </recommendedName>
    <alternativeName>
        <fullName evidence="1">Methionyl-tRNA synthetase</fullName>
        <shortName evidence="1">MetRS</shortName>
    </alternativeName>
</protein>
<keyword id="KW-0030">Aminoacyl-tRNA synthetase</keyword>
<keyword id="KW-0067">ATP-binding</keyword>
<keyword id="KW-0963">Cytoplasm</keyword>
<keyword id="KW-0436">Ligase</keyword>
<keyword id="KW-0479">Metal-binding</keyword>
<keyword id="KW-0547">Nucleotide-binding</keyword>
<keyword id="KW-0648">Protein biosynthesis</keyword>
<keyword id="KW-1185">Reference proteome</keyword>
<keyword id="KW-0862">Zinc</keyword>
<organism>
    <name type="scientific">Dinoroseobacter shibae (strain DSM 16493 / NCIMB 14021 / DFL 12)</name>
    <dbReference type="NCBI Taxonomy" id="398580"/>
    <lineage>
        <taxon>Bacteria</taxon>
        <taxon>Pseudomonadati</taxon>
        <taxon>Pseudomonadota</taxon>
        <taxon>Alphaproteobacteria</taxon>
        <taxon>Rhodobacterales</taxon>
        <taxon>Roseobacteraceae</taxon>
        <taxon>Dinoroseobacter</taxon>
    </lineage>
</organism>
<sequence>MARILITSAIPYINGIKHLGNLVGSQLPADLYARYARARGHEVMFICATDEHGTPAELAAAKAGKPVAEYCAEMHAVQSDIAKRFGLSFDHFGRSSSERNKALTQYFAGKLAENGLIEEVSEKQVYSHADGRFLPDRYIEGTCPNCGYDKARGDQCENCTKQLDPTDLIDPRSAISGSTDLEVRETKHLYLRQSALKDQLDAWIDSKTDWPILTTSIAKKWLHDGDGLQDRGITRDLDWGVPVKKGTEDWPGMEGKVFYVWFDAPIEYIAGTAEWADANGLDDAAWERWWRTDKGADEVRYVQFMGKDNVPFHTLSFPATIMGSGDPWKLVDYIKSFNYLTYDGGQFSTSQGRGVFMDQALEILPADYWRWWLLSHAPENSDSEFTWENFQASVNKDLADVLGNFASRVTKFCRSKYGEEVPAGGAYGPAEEALIAELTTKLRAYEGHMDAMEVRKAAAELRAIWVAGNEYLQAAAPWSVFKTDPDAAAAIIRLGLNLVRFYAVLSQPFIPDASAALLRAMKAEDAGWPGDVAEALAALPAGHAFAVPEVTFAKISDADREAWAEKFSGTRD</sequence>
<dbReference type="EC" id="6.1.1.10" evidence="1"/>
<dbReference type="EMBL" id="CP000830">
    <property type="protein sequence ID" value="ABV94440.1"/>
    <property type="molecule type" value="Genomic_DNA"/>
</dbReference>
<dbReference type="RefSeq" id="WP_012179368.1">
    <property type="nucleotide sequence ID" value="NC_009952.1"/>
</dbReference>
<dbReference type="SMR" id="A8LIJ9"/>
<dbReference type="STRING" id="398580.Dshi_2707"/>
<dbReference type="KEGG" id="dsh:Dshi_2707"/>
<dbReference type="eggNOG" id="COG0143">
    <property type="taxonomic scope" value="Bacteria"/>
</dbReference>
<dbReference type="HOGENOM" id="CLU_009710_1_2_5"/>
<dbReference type="OrthoDB" id="9810191at2"/>
<dbReference type="Proteomes" id="UP000006833">
    <property type="component" value="Chromosome"/>
</dbReference>
<dbReference type="GO" id="GO:0017101">
    <property type="term" value="C:aminoacyl-tRNA synthetase multienzyme complex"/>
    <property type="evidence" value="ECO:0007669"/>
    <property type="project" value="TreeGrafter"/>
</dbReference>
<dbReference type="GO" id="GO:0005829">
    <property type="term" value="C:cytosol"/>
    <property type="evidence" value="ECO:0007669"/>
    <property type="project" value="TreeGrafter"/>
</dbReference>
<dbReference type="GO" id="GO:0005524">
    <property type="term" value="F:ATP binding"/>
    <property type="evidence" value="ECO:0007669"/>
    <property type="project" value="UniProtKB-UniRule"/>
</dbReference>
<dbReference type="GO" id="GO:0046872">
    <property type="term" value="F:metal ion binding"/>
    <property type="evidence" value="ECO:0007669"/>
    <property type="project" value="UniProtKB-KW"/>
</dbReference>
<dbReference type="GO" id="GO:0004825">
    <property type="term" value="F:methionine-tRNA ligase activity"/>
    <property type="evidence" value="ECO:0007669"/>
    <property type="project" value="UniProtKB-UniRule"/>
</dbReference>
<dbReference type="GO" id="GO:0006431">
    <property type="term" value="P:methionyl-tRNA aminoacylation"/>
    <property type="evidence" value="ECO:0007669"/>
    <property type="project" value="UniProtKB-UniRule"/>
</dbReference>
<dbReference type="CDD" id="cd07957">
    <property type="entry name" value="Anticodon_Ia_Met"/>
    <property type="match status" value="1"/>
</dbReference>
<dbReference type="CDD" id="cd00814">
    <property type="entry name" value="MetRS_core"/>
    <property type="match status" value="1"/>
</dbReference>
<dbReference type="FunFam" id="2.20.28.20:FF:000001">
    <property type="entry name" value="Methionine--tRNA ligase"/>
    <property type="match status" value="1"/>
</dbReference>
<dbReference type="Gene3D" id="3.40.50.620">
    <property type="entry name" value="HUPs"/>
    <property type="match status" value="1"/>
</dbReference>
<dbReference type="Gene3D" id="1.10.730.10">
    <property type="entry name" value="Isoleucyl-tRNA Synthetase, Domain 1"/>
    <property type="match status" value="1"/>
</dbReference>
<dbReference type="Gene3D" id="2.20.28.20">
    <property type="entry name" value="Methionyl-tRNA synthetase, Zn-domain"/>
    <property type="match status" value="1"/>
</dbReference>
<dbReference type="HAMAP" id="MF_00098">
    <property type="entry name" value="Met_tRNA_synth_type1"/>
    <property type="match status" value="1"/>
</dbReference>
<dbReference type="InterPro" id="IPR041872">
    <property type="entry name" value="Anticodon_Met"/>
</dbReference>
<dbReference type="InterPro" id="IPR023458">
    <property type="entry name" value="Met-tRNA_ligase_1"/>
</dbReference>
<dbReference type="InterPro" id="IPR014758">
    <property type="entry name" value="Met-tRNA_synth"/>
</dbReference>
<dbReference type="InterPro" id="IPR015413">
    <property type="entry name" value="Methionyl/Leucyl_tRNA_Synth"/>
</dbReference>
<dbReference type="InterPro" id="IPR033911">
    <property type="entry name" value="MetRS_core"/>
</dbReference>
<dbReference type="InterPro" id="IPR029038">
    <property type="entry name" value="MetRS_Zn"/>
</dbReference>
<dbReference type="InterPro" id="IPR014729">
    <property type="entry name" value="Rossmann-like_a/b/a_fold"/>
</dbReference>
<dbReference type="InterPro" id="IPR009080">
    <property type="entry name" value="tRNAsynth_Ia_anticodon-bd"/>
</dbReference>
<dbReference type="NCBIfam" id="TIGR00398">
    <property type="entry name" value="metG"/>
    <property type="match status" value="1"/>
</dbReference>
<dbReference type="PANTHER" id="PTHR45765">
    <property type="entry name" value="METHIONINE--TRNA LIGASE"/>
    <property type="match status" value="1"/>
</dbReference>
<dbReference type="PANTHER" id="PTHR45765:SF1">
    <property type="entry name" value="METHIONINE--TRNA LIGASE, CYTOPLASMIC"/>
    <property type="match status" value="1"/>
</dbReference>
<dbReference type="Pfam" id="PF19303">
    <property type="entry name" value="Anticodon_3"/>
    <property type="match status" value="1"/>
</dbReference>
<dbReference type="Pfam" id="PF09334">
    <property type="entry name" value="tRNA-synt_1g"/>
    <property type="match status" value="1"/>
</dbReference>
<dbReference type="PRINTS" id="PR01041">
    <property type="entry name" value="TRNASYNTHMET"/>
</dbReference>
<dbReference type="SUPFAM" id="SSF47323">
    <property type="entry name" value="Anticodon-binding domain of a subclass of class I aminoacyl-tRNA synthetases"/>
    <property type="match status" value="1"/>
</dbReference>
<dbReference type="SUPFAM" id="SSF57770">
    <property type="entry name" value="Methionyl-tRNA synthetase (MetRS), Zn-domain"/>
    <property type="match status" value="1"/>
</dbReference>
<dbReference type="SUPFAM" id="SSF52374">
    <property type="entry name" value="Nucleotidylyl transferase"/>
    <property type="match status" value="1"/>
</dbReference>
<proteinExistence type="inferred from homology"/>
<feature type="chain" id="PRO_0000331815" description="Methionine--tRNA ligase">
    <location>
        <begin position="1"/>
        <end position="572"/>
    </location>
</feature>
<feature type="short sequence motif" description="'HIGH' region">
    <location>
        <begin position="11"/>
        <end position="21"/>
    </location>
</feature>
<feature type="short sequence motif" description="'KMSKS' region">
    <location>
        <begin position="346"/>
        <end position="350"/>
    </location>
</feature>
<feature type="binding site" evidence="1">
    <location>
        <position position="143"/>
    </location>
    <ligand>
        <name>Zn(2+)</name>
        <dbReference type="ChEBI" id="CHEBI:29105"/>
    </ligand>
</feature>
<feature type="binding site" evidence="1">
    <location>
        <position position="146"/>
    </location>
    <ligand>
        <name>Zn(2+)</name>
        <dbReference type="ChEBI" id="CHEBI:29105"/>
    </ligand>
</feature>
<feature type="binding site" evidence="1">
    <location>
        <position position="156"/>
    </location>
    <ligand>
        <name>Zn(2+)</name>
        <dbReference type="ChEBI" id="CHEBI:29105"/>
    </ligand>
</feature>
<feature type="binding site" evidence="1">
    <location>
        <position position="159"/>
    </location>
    <ligand>
        <name>Zn(2+)</name>
        <dbReference type="ChEBI" id="CHEBI:29105"/>
    </ligand>
</feature>
<feature type="binding site" evidence="1">
    <location>
        <position position="349"/>
    </location>
    <ligand>
        <name>ATP</name>
        <dbReference type="ChEBI" id="CHEBI:30616"/>
    </ligand>
</feature>
<accession>A8LIJ9</accession>
<comment type="function">
    <text evidence="1">Is required not only for elongation of protein synthesis but also for the initiation of all mRNA translation through initiator tRNA(fMet) aminoacylation.</text>
</comment>
<comment type="catalytic activity">
    <reaction evidence="1">
        <text>tRNA(Met) + L-methionine + ATP = L-methionyl-tRNA(Met) + AMP + diphosphate</text>
        <dbReference type="Rhea" id="RHEA:13481"/>
        <dbReference type="Rhea" id="RHEA-COMP:9667"/>
        <dbReference type="Rhea" id="RHEA-COMP:9698"/>
        <dbReference type="ChEBI" id="CHEBI:30616"/>
        <dbReference type="ChEBI" id="CHEBI:33019"/>
        <dbReference type="ChEBI" id="CHEBI:57844"/>
        <dbReference type="ChEBI" id="CHEBI:78442"/>
        <dbReference type="ChEBI" id="CHEBI:78530"/>
        <dbReference type="ChEBI" id="CHEBI:456215"/>
        <dbReference type="EC" id="6.1.1.10"/>
    </reaction>
</comment>
<comment type="cofactor">
    <cofactor evidence="1">
        <name>Zn(2+)</name>
        <dbReference type="ChEBI" id="CHEBI:29105"/>
    </cofactor>
    <text evidence="1">Binds 1 zinc ion per subunit.</text>
</comment>
<comment type="subunit">
    <text evidence="1">Monomer.</text>
</comment>
<comment type="subcellular location">
    <subcellularLocation>
        <location evidence="1">Cytoplasm</location>
    </subcellularLocation>
</comment>
<comment type="similarity">
    <text evidence="1">Belongs to the class-I aminoacyl-tRNA synthetase family. MetG type 1 subfamily.</text>
</comment>
<name>SYM_DINSH</name>